<comment type="subcellular location">
    <subcellularLocation>
        <location evidence="1">Cell membrane</location>
        <topology evidence="1">Lipid-anchor</topology>
    </subcellularLocation>
</comment>
<keyword id="KW-1003">Cell membrane</keyword>
<keyword id="KW-0449">Lipoprotein</keyword>
<keyword id="KW-0472">Membrane</keyword>
<keyword id="KW-0564">Palmitate</keyword>
<keyword id="KW-1185">Reference proteome</keyword>
<keyword id="KW-0732">Signal</keyword>
<proteinExistence type="inferred from homology"/>
<reference key="1">
    <citation type="journal article" date="1997" name="Nature">
        <title>The complete genome sequence of the Gram-positive bacterium Bacillus subtilis.</title>
        <authorList>
            <person name="Kunst F."/>
            <person name="Ogasawara N."/>
            <person name="Moszer I."/>
            <person name="Albertini A.M."/>
            <person name="Alloni G."/>
            <person name="Azevedo V."/>
            <person name="Bertero M.G."/>
            <person name="Bessieres P."/>
            <person name="Bolotin A."/>
            <person name="Borchert S."/>
            <person name="Borriss R."/>
            <person name="Boursier L."/>
            <person name="Brans A."/>
            <person name="Braun M."/>
            <person name="Brignell S.C."/>
            <person name="Bron S."/>
            <person name="Brouillet S."/>
            <person name="Bruschi C.V."/>
            <person name="Caldwell B."/>
            <person name="Capuano V."/>
            <person name="Carter N.M."/>
            <person name="Choi S.-K."/>
            <person name="Codani J.-J."/>
            <person name="Connerton I.F."/>
            <person name="Cummings N.J."/>
            <person name="Daniel R.A."/>
            <person name="Denizot F."/>
            <person name="Devine K.M."/>
            <person name="Duesterhoeft A."/>
            <person name="Ehrlich S.D."/>
            <person name="Emmerson P.T."/>
            <person name="Entian K.-D."/>
            <person name="Errington J."/>
            <person name="Fabret C."/>
            <person name="Ferrari E."/>
            <person name="Foulger D."/>
            <person name="Fritz C."/>
            <person name="Fujita M."/>
            <person name="Fujita Y."/>
            <person name="Fuma S."/>
            <person name="Galizzi A."/>
            <person name="Galleron N."/>
            <person name="Ghim S.-Y."/>
            <person name="Glaser P."/>
            <person name="Goffeau A."/>
            <person name="Golightly E.J."/>
            <person name="Grandi G."/>
            <person name="Guiseppi G."/>
            <person name="Guy B.J."/>
            <person name="Haga K."/>
            <person name="Haiech J."/>
            <person name="Harwood C.R."/>
            <person name="Henaut A."/>
            <person name="Hilbert H."/>
            <person name="Holsappel S."/>
            <person name="Hosono S."/>
            <person name="Hullo M.-F."/>
            <person name="Itaya M."/>
            <person name="Jones L.-M."/>
            <person name="Joris B."/>
            <person name="Karamata D."/>
            <person name="Kasahara Y."/>
            <person name="Klaerr-Blanchard M."/>
            <person name="Klein C."/>
            <person name="Kobayashi Y."/>
            <person name="Koetter P."/>
            <person name="Koningstein G."/>
            <person name="Krogh S."/>
            <person name="Kumano M."/>
            <person name="Kurita K."/>
            <person name="Lapidus A."/>
            <person name="Lardinois S."/>
            <person name="Lauber J."/>
            <person name="Lazarevic V."/>
            <person name="Lee S.-M."/>
            <person name="Levine A."/>
            <person name="Liu H."/>
            <person name="Masuda S."/>
            <person name="Mauel C."/>
            <person name="Medigue C."/>
            <person name="Medina N."/>
            <person name="Mellado R.P."/>
            <person name="Mizuno M."/>
            <person name="Moestl D."/>
            <person name="Nakai S."/>
            <person name="Noback M."/>
            <person name="Noone D."/>
            <person name="O'Reilly M."/>
            <person name="Ogawa K."/>
            <person name="Ogiwara A."/>
            <person name="Oudega B."/>
            <person name="Park S.-H."/>
            <person name="Parro V."/>
            <person name="Pohl T.M."/>
            <person name="Portetelle D."/>
            <person name="Porwollik S."/>
            <person name="Prescott A.M."/>
            <person name="Presecan E."/>
            <person name="Pujic P."/>
            <person name="Purnelle B."/>
            <person name="Rapoport G."/>
            <person name="Rey M."/>
            <person name="Reynolds S."/>
            <person name="Rieger M."/>
            <person name="Rivolta C."/>
            <person name="Rocha E."/>
            <person name="Roche B."/>
            <person name="Rose M."/>
            <person name="Sadaie Y."/>
            <person name="Sato T."/>
            <person name="Scanlan E."/>
            <person name="Schleich S."/>
            <person name="Schroeter R."/>
            <person name="Scoffone F."/>
            <person name="Sekiguchi J."/>
            <person name="Sekowska A."/>
            <person name="Seror S.J."/>
            <person name="Serror P."/>
            <person name="Shin B.-S."/>
            <person name="Soldo B."/>
            <person name="Sorokin A."/>
            <person name="Tacconi E."/>
            <person name="Takagi T."/>
            <person name="Takahashi H."/>
            <person name="Takemaru K."/>
            <person name="Takeuchi M."/>
            <person name="Tamakoshi A."/>
            <person name="Tanaka T."/>
            <person name="Terpstra P."/>
            <person name="Tognoni A."/>
            <person name="Tosato V."/>
            <person name="Uchiyama S."/>
            <person name="Vandenbol M."/>
            <person name="Vannier F."/>
            <person name="Vassarotti A."/>
            <person name="Viari A."/>
            <person name="Wambutt R."/>
            <person name="Wedler E."/>
            <person name="Wedler H."/>
            <person name="Weitzenegger T."/>
            <person name="Winters P."/>
            <person name="Wipat A."/>
            <person name="Yamamoto H."/>
            <person name="Yamane K."/>
            <person name="Yasumoto K."/>
            <person name="Yata K."/>
            <person name="Yoshida K."/>
            <person name="Yoshikawa H.-F."/>
            <person name="Zumstein E."/>
            <person name="Yoshikawa H."/>
            <person name="Danchin A."/>
        </authorList>
    </citation>
    <scope>NUCLEOTIDE SEQUENCE [LARGE SCALE GENOMIC DNA]</scope>
    <source>
        <strain>168</strain>
    </source>
</reference>
<feature type="signal peptide" evidence="1">
    <location>
        <begin position="1"/>
        <end position="21"/>
    </location>
</feature>
<feature type="chain" id="PRO_0000360454" description="SPbeta prophage-derived uncharacterized lipoprotein YonS">
    <location>
        <begin position="22"/>
        <end position="203"/>
    </location>
</feature>
<feature type="region of interest" description="Disordered" evidence="2">
    <location>
        <begin position="27"/>
        <end position="57"/>
    </location>
</feature>
<feature type="compositionally biased region" description="Low complexity" evidence="2">
    <location>
        <begin position="27"/>
        <end position="46"/>
    </location>
</feature>
<feature type="lipid moiety-binding region" description="N-palmitoyl cysteine" evidence="1">
    <location>
        <position position="22"/>
    </location>
</feature>
<feature type="lipid moiety-binding region" description="S-diacylglycerol cysteine" evidence="1">
    <location>
        <position position="22"/>
    </location>
</feature>
<organism>
    <name type="scientific">Bacillus subtilis (strain 168)</name>
    <dbReference type="NCBI Taxonomy" id="224308"/>
    <lineage>
        <taxon>Bacteria</taxon>
        <taxon>Bacillati</taxon>
        <taxon>Bacillota</taxon>
        <taxon>Bacilli</taxon>
        <taxon>Bacillales</taxon>
        <taxon>Bacillaceae</taxon>
        <taxon>Bacillus</taxon>
    </lineage>
</organism>
<sequence length="203" mass="22253">MKLFKKLGILLLITSLILLAACKNSEESSSSSEDTNNATDTNTSESQDISVNGPEKVGDVYEIDGGTAKVMAISNKETTVKTGPIQFTVKKVIAAVANEQLPFIDVQIESENTSDEVVRFRPSLAQLATSTGVQIDEPSLLESDRLLDEYVGKVNDSGSIIYVFDNEEDIKDLESIRLRISSPFNEDLKNLGDKLDLKINLEH</sequence>
<name>YONS_BACSU</name>
<dbReference type="EMBL" id="AL009126">
    <property type="protein sequence ID" value="CAB14019.1"/>
    <property type="molecule type" value="Genomic_DNA"/>
</dbReference>
<dbReference type="RefSeq" id="NP_389984.1">
    <property type="nucleotide sequence ID" value="NC_000964.3"/>
</dbReference>
<dbReference type="RefSeq" id="WP_009967516.1">
    <property type="nucleotide sequence ID" value="NZ_OZ025638.1"/>
</dbReference>
<dbReference type="SMR" id="O31942"/>
<dbReference type="FunCoup" id="O31942">
    <property type="interactions" value="31"/>
</dbReference>
<dbReference type="STRING" id="224308.BSU21010"/>
<dbReference type="jPOST" id="O31942"/>
<dbReference type="PaxDb" id="224308-BSU21010"/>
<dbReference type="DNASU" id="939171"/>
<dbReference type="EnsemblBacteria" id="CAB14019">
    <property type="protein sequence ID" value="CAB14019"/>
    <property type="gene ID" value="BSU_21010"/>
</dbReference>
<dbReference type="GeneID" id="939171"/>
<dbReference type="KEGG" id="bsu:BSU21010"/>
<dbReference type="PATRIC" id="fig|224308.179.peg.2294"/>
<dbReference type="InParanoid" id="O31942"/>
<dbReference type="OrthoDB" id="2352785at2"/>
<dbReference type="BioCyc" id="BSUB:BSU21010-MONOMER"/>
<dbReference type="Proteomes" id="UP000001570">
    <property type="component" value="Chromosome"/>
</dbReference>
<dbReference type="GO" id="GO:0005886">
    <property type="term" value="C:plasma membrane"/>
    <property type="evidence" value="ECO:0007669"/>
    <property type="project" value="UniProtKB-SubCell"/>
</dbReference>
<dbReference type="PROSITE" id="PS51257">
    <property type="entry name" value="PROKAR_LIPOPROTEIN"/>
    <property type="match status" value="1"/>
</dbReference>
<evidence type="ECO:0000255" key="1">
    <source>
        <dbReference type="PROSITE-ProRule" id="PRU00303"/>
    </source>
</evidence>
<evidence type="ECO:0000256" key="2">
    <source>
        <dbReference type="SAM" id="MobiDB-lite"/>
    </source>
</evidence>
<gene>
    <name type="primary">yonS</name>
    <name type="ordered locus">BSU21010</name>
</gene>
<accession>O31942</accession>
<protein>
    <recommendedName>
        <fullName>SPbeta prophage-derived uncharacterized lipoprotein YonS</fullName>
    </recommendedName>
</protein>